<comment type="function">
    <text evidence="1 4 5 6 7 8">Atrochrysone carboxyl ACP thioesterase; part of the gene cluster that mediates the biosynthesis of monodictyphenone, a prenyl xanthone derivative (PubMed:20139316, PubMed:21351751). The pathway begins with the synthesis of atrochrysone thioester by the polyketide synthase (PKS) mdpG (PubMed:20139316). The atrochrysone carboxyl ACP thioesterase mdpF then breaks the thioester bond and releases the atrochrysone carboxylic acid from mdpG (PubMed:20139316). The atrochrysone carboxylic acid is then converted to atrochrysone which is further transformed into emodin anthrone (PubMed:20139316). The next step is performed by the anthrone oxygenase mdpH that catalyzes the oxidation of emodinanthrone to emodin (By similarity). Emodin is further modified to yield monodictyphenone via several steps involving mdpB, mdpC mdpJ, mdpK and mdpL (PubMed:20139316, PubMed:21351751, PubMed:22909031). The short chain dehydrogenase mdpC converts the tautomers of emodin hydroquinone into the 3-hydroxy-3,4-dihydroan-thracen-1(2H)-one derivative (PubMed:22909031, PubMed:26266881). These enzymes with xptA, xptB and xptC are also proposed to be involved in the synthesis of shamixanthone from emodin (PubMed:22730213). Especially, direct reduction of emodin by the short chain dehydrogenase mdpC followed by dehydration catalyzed by the scytalone dehydratase-like protein mdpB gives loss of oxygen and formation of chrysophanol intermediate in two simple steps (PubMed:22730213).</text>
</comment>
<comment type="catalytic activity">
    <reaction evidence="11">
        <text>atrochrysone carboxyl-[ACP] + H2O = atrochrysone carboxylate + holo-[ACP] + H(+)</text>
        <dbReference type="Rhea" id="RHEA:64236"/>
        <dbReference type="Rhea" id="RHEA-COMP:9685"/>
        <dbReference type="Rhea" id="RHEA-COMP:16552"/>
        <dbReference type="ChEBI" id="CHEBI:15377"/>
        <dbReference type="ChEBI" id="CHEBI:15378"/>
        <dbReference type="ChEBI" id="CHEBI:64479"/>
        <dbReference type="ChEBI" id="CHEBI:149712"/>
        <dbReference type="ChEBI" id="CHEBI:149713"/>
    </reaction>
    <physiologicalReaction direction="left-to-right" evidence="11">
        <dbReference type="Rhea" id="RHEA:64237"/>
    </physiologicalReaction>
</comment>
<comment type="cofactor">
    <cofactor evidence="2">
        <name>Zn(2+)</name>
        <dbReference type="ChEBI" id="CHEBI:29105"/>
    </cofactor>
    <text evidence="2">Binds 2 Zn(2+) ions per subunit.</text>
</comment>
<comment type="pathway">
    <text evidence="4">Secondary metabolite biosynthesis.</text>
</comment>
<comment type="disruption phenotype">
    <text evidence="4 5">Impairs the production of monodictyphenone and any of the intermediates of the pathway (PubMed:20139316, PubMed:21351751).</text>
</comment>
<comment type="similarity">
    <text evidence="10">Belongs to the metallo-beta-lactamase superfamily.</text>
</comment>
<sequence length="307" mass="33839">MAQPQQHKGGYKQINKALNICAFEDYLSAQLKHLPQLADVEQLSPRVIRVLGQNAGKGTNTYIVGTGPQRLIIDTGQGIPEWADILDATLKERSISLSHVFLSHWHGDHTGGVPDLLRLYPNLAGAIYKNSPGSDQQPIDDGQVFRVEGATIRAVHGPGHSHDHMCFILEEENAMFTGDNVLGHGTSAVEELGVYMETLRKLNSHHCAVGYPAHGDVITNLPAKIAGELAQKMRREKQVLLTLDRINKESRRTGQVVLVHGDGIDEEVRKMALEPFIDEVLRKLAEDGKVAFEMRGGVKRWFGVGVL</sequence>
<reference key="1">
    <citation type="journal article" date="2005" name="Nature">
        <title>Sequencing of Aspergillus nidulans and comparative analysis with A. fumigatus and A. oryzae.</title>
        <authorList>
            <person name="Galagan J.E."/>
            <person name="Calvo S.E."/>
            <person name="Cuomo C."/>
            <person name="Ma L.-J."/>
            <person name="Wortman J.R."/>
            <person name="Batzoglou S."/>
            <person name="Lee S.-I."/>
            <person name="Bastuerkmen M."/>
            <person name="Spevak C.C."/>
            <person name="Clutterbuck J."/>
            <person name="Kapitonov V."/>
            <person name="Jurka J."/>
            <person name="Scazzocchio C."/>
            <person name="Farman M.L."/>
            <person name="Butler J."/>
            <person name="Purcell S."/>
            <person name="Harris S."/>
            <person name="Braus G.H."/>
            <person name="Draht O."/>
            <person name="Busch S."/>
            <person name="D'Enfert C."/>
            <person name="Bouchier C."/>
            <person name="Goldman G.H."/>
            <person name="Bell-Pedersen D."/>
            <person name="Griffiths-Jones S."/>
            <person name="Doonan J.H."/>
            <person name="Yu J."/>
            <person name="Vienken K."/>
            <person name="Pain A."/>
            <person name="Freitag M."/>
            <person name="Selker E.U."/>
            <person name="Archer D.B."/>
            <person name="Penalva M.A."/>
            <person name="Oakley B.R."/>
            <person name="Momany M."/>
            <person name="Tanaka T."/>
            <person name="Kumagai T."/>
            <person name="Asai K."/>
            <person name="Machida M."/>
            <person name="Nierman W.C."/>
            <person name="Denning D.W."/>
            <person name="Caddick M.X."/>
            <person name="Hynes M."/>
            <person name="Paoletti M."/>
            <person name="Fischer R."/>
            <person name="Miller B.L."/>
            <person name="Dyer P.S."/>
            <person name="Sachs M.S."/>
            <person name="Osmani S.A."/>
            <person name="Birren B.W."/>
        </authorList>
    </citation>
    <scope>NUCLEOTIDE SEQUENCE [LARGE SCALE GENOMIC DNA]</scope>
    <source>
        <strain>FGSC A4 / ATCC 38163 / CBS 112.46 / NRRL 194 / M139</strain>
    </source>
</reference>
<reference key="2">
    <citation type="journal article" date="2009" name="Fungal Genet. Biol.">
        <title>The 2008 update of the Aspergillus nidulans genome annotation: a community effort.</title>
        <authorList>
            <person name="Wortman J.R."/>
            <person name="Gilsenan J.M."/>
            <person name="Joardar V."/>
            <person name="Deegan J."/>
            <person name="Clutterbuck J."/>
            <person name="Andersen M.R."/>
            <person name="Archer D."/>
            <person name="Bencina M."/>
            <person name="Braus G."/>
            <person name="Coutinho P."/>
            <person name="von Dohren H."/>
            <person name="Doonan J."/>
            <person name="Driessen A.J."/>
            <person name="Durek P."/>
            <person name="Espeso E."/>
            <person name="Fekete E."/>
            <person name="Flipphi M."/>
            <person name="Estrada C.G."/>
            <person name="Geysens S."/>
            <person name="Goldman G."/>
            <person name="de Groot P.W."/>
            <person name="Hansen K."/>
            <person name="Harris S.D."/>
            <person name="Heinekamp T."/>
            <person name="Helmstaedt K."/>
            <person name="Henrissat B."/>
            <person name="Hofmann G."/>
            <person name="Homan T."/>
            <person name="Horio T."/>
            <person name="Horiuchi H."/>
            <person name="James S."/>
            <person name="Jones M."/>
            <person name="Karaffa L."/>
            <person name="Karanyi Z."/>
            <person name="Kato M."/>
            <person name="Keller N."/>
            <person name="Kelly D.E."/>
            <person name="Kiel J.A."/>
            <person name="Kim J.M."/>
            <person name="van der Klei I.J."/>
            <person name="Klis F.M."/>
            <person name="Kovalchuk A."/>
            <person name="Krasevec N."/>
            <person name="Kubicek C.P."/>
            <person name="Liu B."/>
            <person name="Maccabe A."/>
            <person name="Meyer V."/>
            <person name="Mirabito P."/>
            <person name="Miskei M."/>
            <person name="Mos M."/>
            <person name="Mullins J."/>
            <person name="Nelson D.R."/>
            <person name="Nielsen J."/>
            <person name="Oakley B.R."/>
            <person name="Osmani S.A."/>
            <person name="Pakula T."/>
            <person name="Paszewski A."/>
            <person name="Paulsen I."/>
            <person name="Pilsyk S."/>
            <person name="Pocsi I."/>
            <person name="Punt P.J."/>
            <person name="Ram A.F."/>
            <person name="Ren Q."/>
            <person name="Robellet X."/>
            <person name="Robson G."/>
            <person name="Seiboth B."/>
            <person name="van Solingen P."/>
            <person name="Specht T."/>
            <person name="Sun J."/>
            <person name="Taheri-Talesh N."/>
            <person name="Takeshita N."/>
            <person name="Ussery D."/>
            <person name="vanKuyk P.A."/>
            <person name="Visser H."/>
            <person name="van de Vondervoort P.J."/>
            <person name="de Vries R.P."/>
            <person name="Walton J."/>
            <person name="Xiang X."/>
            <person name="Xiong Y."/>
            <person name="Zeng A.P."/>
            <person name="Brandt B.W."/>
            <person name="Cornell M.J."/>
            <person name="van den Hondel C.A."/>
            <person name="Visser J."/>
            <person name="Oliver S.G."/>
            <person name="Turner G."/>
        </authorList>
    </citation>
    <scope>GENOME REANNOTATION</scope>
    <source>
        <strain>FGSC A4 / ATCC 38163 / CBS 112.46 / NRRL 194 / M139</strain>
    </source>
</reference>
<reference key="3">
    <citation type="journal article" date="2010" name="Appl. Environ. Microbiol.">
        <title>Characterization of the Aspergillus nidulans monodictyphenone gene cluster.</title>
        <authorList>
            <person name="Chiang Y.M."/>
            <person name="Szewczyk E."/>
            <person name="Davidson A.D."/>
            <person name="Entwistle R."/>
            <person name="Keller N.P."/>
            <person name="Wang C.C."/>
            <person name="Oakley B.R."/>
        </authorList>
    </citation>
    <scope>FUNCTION</scope>
    <scope>DISRUPTION PHENOTYPE</scope>
    <scope>PATHWAY</scope>
</reference>
<reference key="4">
    <citation type="journal article" date="2011" name="J. Am. Chem. Soc.">
        <title>Genome-based deletion analysis reveals the prenyl xanthone biosynthesis pathway in Aspergillus nidulans.</title>
        <authorList>
            <person name="Sanchez J.F."/>
            <person name="Entwistle R."/>
            <person name="Hung J.H."/>
            <person name="Yaegashi J."/>
            <person name="Jain S."/>
            <person name="Chiang Y.M."/>
            <person name="Wang C.C."/>
            <person name="Oakley B.R."/>
        </authorList>
    </citation>
    <scope>FUNCTION</scope>
    <scope>DISRUPTION PHENOTYPE</scope>
    <scope>PATHWAY</scope>
</reference>
<reference key="5">
    <citation type="journal article" date="2012" name="ChemBioChem">
        <title>Genetic and biosynthetic studies of the fungal prenylated xanthone shamixanthone and related metabolites in Aspergillus spp. revisited.</title>
        <authorList>
            <person name="Simpson T.J."/>
        </authorList>
    </citation>
    <scope>FUNCTION</scope>
</reference>
<reference key="6">
    <citation type="journal article" date="2012" name="J. Am. Chem. Soc.">
        <title>Tautomers of anthrahydroquinones: enzymatic reduction and implications for chrysophanol, monodictyphenone, and related xanthone biosyntheses.</title>
        <authorList>
            <person name="Schaetzle M.A."/>
            <person name="Husain S.M."/>
            <person name="Ferlaino S."/>
            <person name="Mueller M."/>
        </authorList>
    </citation>
    <scope>FUNCTION</scope>
</reference>
<reference key="7">
    <citation type="journal article" date="2015" name="J. Am. Chem. Soc.">
        <title>New insights into the conversion of versicolorin A in the biosynthesis of aflatoxin B1.</title>
        <authorList>
            <person name="Conradt D."/>
            <person name="Schaetzle M.A."/>
            <person name="Haas J."/>
            <person name="Townsend C.A."/>
            <person name="Mueller M."/>
        </authorList>
    </citation>
    <scope>FUNCTION</scope>
</reference>
<keyword id="KW-0378">Hydrolase</keyword>
<keyword id="KW-0479">Metal-binding</keyword>
<keyword id="KW-1185">Reference proteome</keyword>
<keyword id="KW-0862">Zinc</keyword>
<dbReference type="EC" id="3.1.2.-" evidence="11"/>
<dbReference type="EMBL" id="BN001308">
    <property type="protein sequence ID" value="CBF90099.1"/>
    <property type="molecule type" value="Genomic_DNA"/>
</dbReference>
<dbReference type="EMBL" id="AACD01000005">
    <property type="protein sequence ID" value="EAA66022.1"/>
    <property type="molecule type" value="Genomic_DNA"/>
</dbReference>
<dbReference type="RefSeq" id="XP_657753.1">
    <property type="nucleotide sequence ID" value="XM_652661.1"/>
</dbReference>
<dbReference type="SMR" id="Q5BH31"/>
<dbReference type="STRING" id="227321.Q5BH31"/>
<dbReference type="EnsemblFungi" id="CBF90099">
    <property type="protein sequence ID" value="CBF90099"/>
    <property type="gene ID" value="ANIA_00149"/>
</dbReference>
<dbReference type="KEGG" id="ani:ANIA_00149"/>
<dbReference type="VEuPathDB" id="FungiDB:AN0149"/>
<dbReference type="eggNOG" id="KOG0813">
    <property type="taxonomic scope" value="Eukaryota"/>
</dbReference>
<dbReference type="HOGENOM" id="CLU_048478_1_0_1"/>
<dbReference type="InParanoid" id="Q5BH31"/>
<dbReference type="OMA" id="NICAFEE"/>
<dbReference type="OrthoDB" id="17458at2759"/>
<dbReference type="Proteomes" id="UP000000560">
    <property type="component" value="Chromosome VIII"/>
</dbReference>
<dbReference type="GO" id="GO:0016787">
    <property type="term" value="F:hydrolase activity"/>
    <property type="evidence" value="ECO:0007669"/>
    <property type="project" value="UniProtKB-KW"/>
</dbReference>
<dbReference type="GO" id="GO:0046872">
    <property type="term" value="F:metal ion binding"/>
    <property type="evidence" value="ECO:0007669"/>
    <property type="project" value="UniProtKB-KW"/>
</dbReference>
<dbReference type="GO" id="GO:1900815">
    <property type="term" value="P:monodictyphenone biosynthetic process"/>
    <property type="evidence" value="ECO:0000315"/>
    <property type="project" value="AspGD"/>
</dbReference>
<dbReference type="GO" id="GO:0044550">
    <property type="term" value="P:secondary metabolite biosynthetic process"/>
    <property type="evidence" value="ECO:0000318"/>
    <property type="project" value="GO_Central"/>
</dbReference>
<dbReference type="CDD" id="cd07722">
    <property type="entry name" value="LACTB2-like_MBL-fold"/>
    <property type="match status" value="1"/>
</dbReference>
<dbReference type="FunFam" id="3.60.15.10:FF:000041">
    <property type="entry name" value="Metallo-beta-lactamase domain protein"/>
    <property type="match status" value="1"/>
</dbReference>
<dbReference type="Gene3D" id="3.60.15.10">
    <property type="entry name" value="Ribonuclease Z/Hydroxyacylglutathione hydrolase-like"/>
    <property type="match status" value="1"/>
</dbReference>
<dbReference type="Gene3D" id="1.10.10.10">
    <property type="entry name" value="Winged helix-like DNA-binding domain superfamily/Winged helix DNA-binding domain"/>
    <property type="match status" value="1"/>
</dbReference>
<dbReference type="InterPro" id="IPR047921">
    <property type="entry name" value="LACTB2-like_MBL-fold"/>
</dbReference>
<dbReference type="InterPro" id="IPR001279">
    <property type="entry name" value="Metallo-B-lactamas"/>
</dbReference>
<dbReference type="InterPro" id="IPR036866">
    <property type="entry name" value="RibonucZ/Hydroxyglut_hydro"/>
</dbReference>
<dbReference type="InterPro" id="IPR050662">
    <property type="entry name" value="Sec-metab_biosynth-thioest"/>
</dbReference>
<dbReference type="InterPro" id="IPR036388">
    <property type="entry name" value="WH-like_DNA-bd_sf"/>
</dbReference>
<dbReference type="PANTHER" id="PTHR23131:SF3">
    <property type="entry name" value="ATROCHRYSONE CARBOXYL ACP THIOESTERASE"/>
    <property type="match status" value="1"/>
</dbReference>
<dbReference type="PANTHER" id="PTHR23131">
    <property type="entry name" value="ENDORIBONUCLEASE LACTB2"/>
    <property type="match status" value="1"/>
</dbReference>
<dbReference type="Pfam" id="PF00753">
    <property type="entry name" value="Lactamase_B"/>
    <property type="match status" value="1"/>
</dbReference>
<dbReference type="SMART" id="SM00849">
    <property type="entry name" value="Lactamase_B"/>
    <property type="match status" value="1"/>
</dbReference>
<dbReference type="SUPFAM" id="SSF56281">
    <property type="entry name" value="Metallo-hydrolase/oxidoreductase"/>
    <property type="match status" value="1"/>
</dbReference>
<name>MDPF_EMENI</name>
<gene>
    <name evidence="9" type="primary">mdpF</name>
    <name type="ORF">AN0149</name>
</gene>
<protein>
    <recommendedName>
        <fullName evidence="9">Atrochrysone carboxyl ACP thioesterase</fullName>
        <shortName evidence="9">ACTE</shortName>
        <ecNumber evidence="11">3.1.2.-</ecNumber>
    </recommendedName>
    <alternativeName>
        <fullName evidence="9">Monodictyphenone synthesis protein F</fullName>
    </alternativeName>
</protein>
<feature type="chain" id="PRO_0000437055" description="Atrochrysone carboxyl ACP thioesterase">
    <location>
        <begin position="1"/>
        <end position="307"/>
    </location>
</feature>
<feature type="active site" description="Proton donor/acceptor" evidence="3">
    <location>
        <position position="108"/>
    </location>
</feature>
<feature type="binding site" evidence="2">
    <location>
        <position position="104"/>
    </location>
    <ligand>
        <name>Zn(2+)</name>
        <dbReference type="ChEBI" id="CHEBI:29105"/>
        <label>1</label>
        <note>catalytic</note>
    </ligand>
</feature>
<feature type="binding site" evidence="2">
    <location>
        <position position="106"/>
    </location>
    <ligand>
        <name>Zn(2+)</name>
        <dbReference type="ChEBI" id="CHEBI:29105"/>
        <label>1</label>
        <note>catalytic</note>
    </ligand>
</feature>
<feature type="binding site" evidence="2">
    <location>
        <position position="108"/>
    </location>
    <ligand>
        <name>Zn(2+)</name>
        <dbReference type="ChEBI" id="CHEBI:29105"/>
        <label>2</label>
        <note>catalytic</note>
    </ligand>
</feature>
<feature type="binding site" evidence="2">
    <location>
        <position position="109"/>
    </location>
    <ligand>
        <name>Zn(2+)</name>
        <dbReference type="ChEBI" id="CHEBI:29105"/>
        <label>2</label>
        <note>catalytic</note>
    </ligand>
</feature>
<accession>Q5BH31</accession>
<accession>C8VQ67</accession>
<organism>
    <name type="scientific">Emericella nidulans (strain FGSC A4 / ATCC 38163 / CBS 112.46 / NRRL 194 / M139)</name>
    <name type="common">Aspergillus nidulans</name>
    <dbReference type="NCBI Taxonomy" id="227321"/>
    <lineage>
        <taxon>Eukaryota</taxon>
        <taxon>Fungi</taxon>
        <taxon>Dikarya</taxon>
        <taxon>Ascomycota</taxon>
        <taxon>Pezizomycotina</taxon>
        <taxon>Eurotiomycetes</taxon>
        <taxon>Eurotiomycetidae</taxon>
        <taxon>Eurotiales</taxon>
        <taxon>Aspergillaceae</taxon>
        <taxon>Aspergillus</taxon>
        <taxon>Aspergillus subgen. Nidulantes</taxon>
    </lineage>
</organism>
<evidence type="ECO:0000250" key="1">
    <source>
        <dbReference type="UniProtKB" id="Q0CCY3"/>
    </source>
</evidence>
<evidence type="ECO:0000250" key="2">
    <source>
        <dbReference type="UniProtKB" id="Q988B9"/>
    </source>
</evidence>
<evidence type="ECO:0000255" key="3"/>
<evidence type="ECO:0000269" key="4">
    <source>
    </source>
</evidence>
<evidence type="ECO:0000269" key="5">
    <source>
    </source>
</evidence>
<evidence type="ECO:0000269" key="6">
    <source>
    </source>
</evidence>
<evidence type="ECO:0000269" key="7">
    <source>
    </source>
</evidence>
<evidence type="ECO:0000269" key="8">
    <source>
    </source>
</evidence>
<evidence type="ECO:0000303" key="9">
    <source>
    </source>
</evidence>
<evidence type="ECO:0000305" key="10"/>
<evidence type="ECO:0000305" key="11">
    <source>
    </source>
</evidence>
<proteinExistence type="inferred from homology"/>